<evidence type="ECO:0000250" key="1"/>
<evidence type="ECO:0000255" key="2"/>
<evidence type="ECO:0000305" key="3"/>
<feature type="signal peptide" evidence="2">
    <location>
        <begin position="1"/>
        <end position="20"/>
    </location>
</feature>
<feature type="chain" id="PRO_0000009290" description="Uncharacterized fimbrial chaperone YbgP">
    <location>
        <begin position="21"/>
        <end position="242"/>
    </location>
</feature>
<sequence>MTFIKGLPLMLLTISLGCNAAVQPDRTRIVFNANDKATSLRIENQSDKLPYLAYSWIENEKGEKSDALLVALPPIQRLEPKATSQVRVVKQASTTQLPGDRETLFFYNMREIPPAPDKSSDHAILQVAIQSRIKLFWRPAALRKKAGEKVELQLQVSQQGNQLTLKNPTAYYLTIAYLGRNEKGVLPGFKTVMVAPFSTVNTNTGSYSGSQFYLGYMDDYGALRMTTLNCSGQCRLQAVEAK</sequence>
<gene>
    <name type="primary">ybgP</name>
    <name type="ordered locus">b0717</name>
    <name type="ordered locus">JW0707</name>
</gene>
<organism>
    <name type="scientific">Escherichia coli (strain K12)</name>
    <dbReference type="NCBI Taxonomy" id="83333"/>
    <lineage>
        <taxon>Bacteria</taxon>
        <taxon>Pseudomonadati</taxon>
        <taxon>Pseudomonadota</taxon>
        <taxon>Gammaproteobacteria</taxon>
        <taxon>Enterobacterales</taxon>
        <taxon>Enterobacteriaceae</taxon>
        <taxon>Escherichia</taxon>
    </lineage>
</organism>
<keyword id="KW-0143">Chaperone</keyword>
<keyword id="KW-1029">Fimbrium biogenesis</keyword>
<keyword id="KW-0393">Immunoglobulin domain</keyword>
<keyword id="KW-0574">Periplasm</keyword>
<keyword id="KW-1185">Reference proteome</keyword>
<keyword id="KW-0732">Signal</keyword>
<comment type="function">
    <text>Could be required for the biogenesis of the putative YbgD fimbria.</text>
</comment>
<comment type="subcellular location">
    <subcellularLocation>
        <location evidence="1">Periplasm</location>
    </subcellularLocation>
</comment>
<comment type="similarity">
    <text evidence="3">Belongs to the periplasmic pilus chaperone family.</text>
</comment>
<reference key="1">
    <citation type="journal article" date="1996" name="DNA Res.">
        <title>A 718-kb DNA sequence of the Escherichia coli K-12 genome corresponding to the 12.7-28.0 min region on the linkage map.</title>
        <authorList>
            <person name="Oshima T."/>
            <person name="Aiba H."/>
            <person name="Baba T."/>
            <person name="Fujita K."/>
            <person name="Hayashi K."/>
            <person name="Honjo A."/>
            <person name="Ikemoto K."/>
            <person name="Inada T."/>
            <person name="Itoh T."/>
            <person name="Kajihara M."/>
            <person name="Kanai K."/>
            <person name="Kashimoto K."/>
            <person name="Kimura S."/>
            <person name="Kitagawa M."/>
            <person name="Makino K."/>
            <person name="Masuda S."/>
            <person name="Miki T."/>
            <person name="Mizobuchi K."/>
            <person name="Mori H."/>
            <person name="Motomura K."/>
            <person name="Nakamura Y."/>
            <person name="Nashimoto H."/>
            <person name="Nishio Y."/>
            <person name="Saito N."/>
            <person name="Sampei G."/>
            <person name="Seki Y."/>
            <person name="Tagami H."/>
            <person name="Takemoto K."/>
            <person name="Wada C."/>
            <person name="Yamamoto Y."/>
            <person name="Yano M."/>
            <person name="Horiuchi T."/>
        </authorList>
    </citation>
    <scope>NUCLEOTIDE SEQUENCE [LARGE SCALE GENOMIC DNA]</scope>
    <source>
        <strain>K12 / W3110 / ATCC 27325 / DSM 5911</strain>
    </source>
</reference>
<reference key="2">
    <citation type="journal article" date="1997" name="Science">
        <title>The complete genome sequence of Escherichia coli K-12.</title>
        <authorList>
            <person name="Blattner F.R."/>
            <person name="Plunkett G. III"/>
            <person name="Bloch C.A."/>
            <person name="Perna N.T."/>
            <person name="Burland V."/>
            <person name="Riley M."/>
            <person name="Collado-Vides J."/>
            <person name="Glasner J.D."/>
            <person name="Rode C.K."/>
            <person name="Mayhew G.F."/>
            <person name="Gregor J."/>
            <person name="Davis N.W."/>
            <person name="Kirkpatrick H.A."/>
            <person name="Goeden M.A."/>
            <person name="Rose D.J."/>
            <person name="Mau B."/>
            <person name="Shao Y."/>
        </authorList>
    </citation>
    <scope>NUCLEOTIDE SEQUENCE [LARGE SCALE GENOMIC DNA]</scope>
    <source>
        <strain>K12 / MG1655 / ATCC 47076</strain>
    </source>
</reference>
<reference key="3">
    <citation type="journal article" date="2006" name="Mol. Syst. Biol.">
        <title>Highly accurate genome sequences of Escherichia coli K-12 strains MG1655 and W3110.</title>
        <authorList>
            <person name="Hayashi K."/>
            <person name="Morooka N."/>
            <person name="Yamamoto Y."/>
            <person name="Fujita K."/>
            <person name="Isono K."/>
            <person name="Choi S."/>
            <person name="Ohtsubo E."/>
            <person name="Baba T."/>
            <person name="Wanner B.L."/>
            <person name="Mori H."/>
            <person name="Horiuchi T."/>
        </authorList>
    </citation>
    <scope>NUCLEOTIDE SEQUENCE [LARGE SCALE GENOMIC DNA]</scope>
    <source>
        <strain>K12 / W3110 / ATCC 27325 / DSM 5911</strain>
    </source>
</reference>
<dbReference type="EMBL" id="U00096">
    <property type="protein sequence ID" value="AAC73811.1"/>
    <property type="molecule type" value="Genomic_DNA"/>
</dbReference>
<dbReference type="EMBL" id="AP009048">
    <property type="protein sequence ID" value="BAA35381.1"/>
    <property type="molecule type" value="Genomic_DNA"/>
</dbReference>
<dbReference type="PIR" id="D64807">
    <property type="entry name" value="D64807"/>
</dbReference>
<dbReference type="RefSeq" id="NP_415245.1">
    <property type="nucleotide sequence ID" value="NC_000913.3"/>
</dbReference>
<dbReference type="RefSeq" id="WP_000142799.1">
    <property type="nucleotide sequence ID" value="NZ_SSZK01000033.1"/>
</dbReference>
<dbReference type="SMR" id="P75749"/>
<dbReference type="BioGRID" id="4263104">
    <property type="interactions" value="158"/>
</dbReference>
<dbReference type="BioGRID" id="849499">
    <property type="interactions" value="1"/>
</dbReference>
<dbReference type="FunCoup" id="P75749">
    <property type="interactions" value="184"/>
</dbReference>
<dbReference type="IntAct" id="P75749">
    <property type="interactions" value="4"/>
</dbReference>
<dbReference type="STRING" id="511145.b0717"/>
<dbReference type="PaxDb" id="511145-b0717"/>
<dbReference type="EnsemblBacteria" id="AAC73811">
    <property type="protein sequence ID" value="AAC73811"/>
    <property type="gene ID" value="b0717"/>
</dbReference>
<dbReference type="GeneID" id="945110"/>
<dbReference type="KEGG" id="ecj:JW0707"/>
<dbReference type="KEGG" id="eco:b0717"/>
<dbReference type="KEGG" id="ecoc:C3026_03585"/>
<dbReference type="PATRIC" id="fig|1411691.4.peg.1556"/>
<dbReference type="EchoBASE" id="EB3096"/>
<dbReference type="eggNOG" id="COG3121">
    <property type="taxonomic scope" value="Bacteria"/>
</dbReference>
<dbReference type="HOGENOM" id="CLU_070768_5_1_6"/>
<dbReference type="InParanoid" id="P75749"/>
<dbReference type="OMA" id="AQVWLEN"/>
<dbReference type="OrthoDB" id="9131059at2"/>
<dbReference type="PhylomeDB" id="P75749"/>
<dbReference type="BioCyc" id="EcoCyc:G6386-MONOMER"/>
<dbReference type="PRO" id="PR:P75749"/>
<dbReference type="Proteomes" id="UP000000625">
    <property type="component" value="Chromosome"/>
</dbReference>
<dbReference type="GO" id="GO:0030288">
    <property type="term" value="C:outer membrane-bounded periplasmic space"/>
    <property type="evidence" value="ECO:0000318"/>
    <property type="project" value="GO_Central"/>
</dbReference>
<dbReference type="GO" id="GO:0044183">
    <property type="term" value="F:protein folding chaperone"/>
    <property type="evidence" value="ECO:0000318"/>
    <property type="project" value="GO_Central"/>
</dbReference>
<dbReference type="GO" id="GO:0071555">
    <property type="term" value="P:cell wall organization"/>
    <property type="evidence" value="ECO:0007669"/>
    <property type="project" value="InterPro"/>
</dbReference>
<dbReference type="GO" id="GO:0061077">
    <property type="term" value="P:chaperone-mediated protein folding"/>
    <property type="evidence" value="ECO:0000318"/>
    <property type="project" value="GO_Central"/>
</dbReference>
<dbReference type="GO" id="GO:0006457">
    <property type="term" value="P:protein folding"/>
    <property type="evidence" value="ECO:0000315"/>
    <property type="project" value="EcoCyc"/>
</dbReference>
<dbReference type="FunFam" id="2.60.40.10:FF:000458">
    <property type="entry name" value="Molecular chaperone FimC"/>
    <property type="match status" value="1"/>
</dbReference>
<dbReference type="Gene3D" id="2.60.40.10">
    <property type="entry name" value="Immunoglobulins"/>
    <property type="match status" value="2"/>
</dbReference>
<dbReference type="InterPro" id="IPR013783">
    <property type="entry name" value="Ig-like_fold"/>
</dbReference>
<dbReference type="InterPro" id="IPR008962">
    <property type="entry name" value="PapD-like_sf"/>
</dbReference>
<dbReference type="InterPro" id="IPR050643">
    <property type="entry name" value="Periplasmic_pilus_chap"/>
</dbReference>
<dbReference type="InterPro" id="IPR036316">
    <property type="entry name" value="Pili_assmbl_chap_C_dom_sf"/>
</dbReference>
<dbReference type="InterPro" id="IPR001829">
    <property type="entry name" value="Pili_assmbl_chaperone_bac"/>
</dbReference>
<dbReference type="InterPro" id="IPR016148">
    <property type="entry name" value="Pili_assmbl_chaperone_C"/>
</dbReference>
<dbReference type="InterPro" id="IPR018046">
    <property type="entry name" value="Pili_assmbl_chaperone_CS"/>
</dbReference>
<dbReference type="InterPro" id="IPR016147">
    <property type="entry name" value="Pili_assmbl_chaperone_N"/>
</dbReference>
<dbReference type="PANTHER" id="PTHR30251:SF5">
    <property type="entry name" value="FIMBRIAL CHAPARONE PROTEIN"/>
    <property type="match status" value="1"/>
</dbReference>
<dbReference type="PANTHER" id="PTHR30251">
    <property type="entry name" value="PILUS ASSEMBLY CHAPERONE"/>
    <property type="match status" value="1"/>
</dbReference>
<dbReference type="Pfam" id="PF02753">
    <property type="entry name" value="PapD_C"/>
    <property type="match status" value="1"/>
</dbReference>
<dbReference type="Pfam" id="PF00345">
    <property type="entry name" value="PapD_N"/>
    <property type="match status" value="1"/>
</dbReference>
<dbReference type="PRINTS" id="PR00969">
    <property type="entry name" value="CHAPERONPILI"/>
</dbReference>
<dbReference type="SUPFAM" id="SSF49354">
    <property type="entry name" value="PapD-like"/>
    <property type="match status" value="1"/>
</dbReference>
<dbReference type="SUPFAM" id="SSF49584">
    <property type="entry name" value="Periplasmic chaperone C-domain"/>
    <property type="match status" value="1"/>
</dbReference>
<dbReference type="PROSITE" id="PS00635">
    <property type="entry name" value="PILI_CHAPERONE"/>
    <property type="match status" value="1"/>
</dbReference>
<dbReference type="PROSITE" id="PS51257">
    <property type="entry name" value="PROKAR_LIPOPROTEIN"/>
    <property type="match status" value="1"/>
</dbReference>
<name>YBGP_ECOLI</name>
<accession>P75749</accession>
<protein>
    <recommendedName>
        <fullName>Uncharacterized fimbrial chaperone YbgP</fullName>
    </recommendedName>
</protein>
<proteinExistence type="inferred from homology"/>